<comment type="function">
    <text evidence="2">GTP hydrolase that promotes the GTP-dependent binding of aminoacyl-tRNA to the A-site of ribosomes during protein biosynthesis.</text>
</comment>
<comment type="catalytic activity">
    <reaction evidence="2">
        <text>GTP + H2O = GDP + phosphate + H(+)</text>
        <dbReference type="Rhea" id="RHEA:19669"/>
        <dbReference type="ChEBI" id="CHEBI:15377"/>
        <dbReference type="ChEBI" id="CHEBI:15378"/>
        <dbReference type="ChEBI" id="CHEBI:37565"/>
        <dbReference type="ChEBI" id="CHEBI:43474"/>
        <dbReference type="ChEBI" id="CHEBI:58189"/>
        <dbReference type="EC" id="3.6.5.3"/>
    </reaction>
    <physiologicalReaction direction="left-to-right" evidence="2">
        <dbReference type="Rhea" id="RHEA:19670"/>
    </physiologicalReaction>
</comment>
<comment type="subunit">
    <text evidence="2">Monomer.</text>
</comment>
<comment type="subcellular location">
    <subcellularLocation>
        <location evidence="2">Cytoplasm</location>
    </subcellularLocation>
</comment>
<comment type="similarity">
    <text evidence="2">Belongs to the TRAFAC class translation factor GTPase superfamily. Classic translation factor GTPase family. EF-Tu/EF-1A subfamily.</text>
</comment>
<reference key="1">
    <citation type="thesis" date="1994" institute="Heinrich-Heine University / Duesseldorf" country="Germany">
        <authorList>
            <person name="Bruex A."/>
        </authorList>
    </citation>
    <scope>NUCLEOTIDE SEQUENCE [GENOMIC DNA]</scope>
    <source>
        <strain>ATCC 33697 / U26 / Serovar 14</strain>
    </source>
</reference>
<reference key="2">
    <citation type="journal article" date="2000" name="Nature">
        <title>The complete sequence of the mucosal pathogen Ureaplasma urealyticum.</title>
        <authorList>
            <person name="Glass J.I."/>
            <person name="Lefkowitz E.J."/>
            <person name="Glass J.S."/>
            <person name="Heiner C.R."/>
            <person name="Chen E.Y."/>
            <person name="Cassell G.H."/>
        </authorList>
    </citation>
    <scope>NUCLEOTIDE SEQUENCE [LARGE SCALE GENOMIC DNA]</scope>
    <source>
        <strain>ATCC 700970</strain>
    </source>
</reference>
<accession>P50068</accession>
<protein>
    <recommendedName>
        <fullName evidence="2">Elongation factor Tu</fullName>
        <shortName evidence="2">EF-Tu</shortName>
        <ecNumber evidence="2">3.6.5.3</ecNumber>
    </recommendedName>
</protein>
<proteinExistence type="inferred from homology"/>
<sequence length="394" mass="42902">MAKAKFERTKPHVNIGTIGHVDHGKTTLTAAISTVLAKKGQAIAQSYADVDKTPEERERGITINASHVEYETKTRHYAHVDCPGHADYVKNMITGAAQMDGAILVIAASDGVMAQTKEHILLARQVGVPKIVVFLNKCDFMTDPDMQDLVEMEVRELLSKYGFDGDNTPVIRGSGLKALEGDPVWEAKIDELMDAVDSWIPLPERSTDKPFLLAIEDVFTISGRGTVVTGRVERGVLKVNDEVEIVGLKDTQKTVVTGIEMFRKSLDQAEAGDNAGILLRGIKKEDVERGQVLVKPGSIKPHRTFTAKVYILKKEEGGRHTPIVSGYRPQFYFRTTDVTGAISLPAGVDLVMPGDDVEMTVELIAPVAIEDGSKFSIREGGKTVGHGSVIKTSN</sequence>
<gene>
    <name evidence="2" type="primary">tuf</name>
    <name type="ordered locus">UU522</name>
</gene>
<evidence type="ECO:0000250" key="1"/>
<evidence type="ECO:0000255" key="2">
    <source>
        <dbReference type="HAMAP-Rule" id="MF_00118"/>
    </source>
</evidence>
<organism>
    <name type="scientific">Ureaplasma parvum serovar 3 (strain ATCC 700970)</name>
    <dbReference type="NCBI Taxonomy" id="273119"/>
    <lineage>
        <taxon>Bacteria</taxon>
        <taxon>Bacillati</taxon>
        <taxon>Mycoplasmatota</taxon>
        <taxon>Mycoplasmoidales</taxon>
        <taxon>Mycoplasmoidaceae</taxon>
        <taxon>Ureaplasma</taxon>
    </lineage>
</organism>
<name>EFTU_UREPA</name>
<feature type="chain" id="PRO_0000091430" description="Elongation factor Tu">
    <location>
        <begin position="1"/>
        <end position="394"/>
    </location>
</feature>
<feature type="domain" description="tr-type G">
    <location>
        <begin position="10"/>
        <end position="204"/>
    </location>
</feature>
<feature type="region of interest" description="G1" evidence="1">
    <location>
        <begin position="19"/>
        <end position="26"/>
    </location>
</feature>
<feature type="region of interest" description="G2" evidence="1">
    <location>
        <begin position="60"/>
        <end position="64"/>
    </location>
</feature>
<feature type="region of interest" description="G3" evidence="1">
    <location>
        <begin position="81"/>
        <end position="84"/>
    </location>
</feature>
<feature type="region of interest" description="G4" evidence="1">
    <location>
        <begin position="136"/>
        <end position="139"/>
    </location>
</feature>
<feature type="region of interest" description="G5" evidence="1">
    <location>
        <begin position="174"/>
        <end position="176"/>
    </location>
</feature>
<feature type="binding site" evidence="2">
    <location>
        <begin position="19"/>
        <end position="26"/>
    </location>
    <ligand>
        <name>GTP</name>
        <dbReference type="ChEBI" id="CHEBI:37565"/>
    </ligand>
</feature>
<feature type="binding site" evidence="2">
    <location>
        <position position="26"/>
    </location>
    <ligand>
        <name>Mg(2+)</name>
        <dbReference type="ChEBI" id="CHEBI:18420"/>
    </ligand>
</feature>
<feature type="binding site" evidence="2">
    <location>
        <begin position="81"/>
        <end position="85"/>
    </location>
    <ligand>
        <name>GTP</name>
        <dbReference type="ChEBI" id="CHEBI:37565"/>
    </ligand>
</feature>
<feature type="binding site" evidence="2">
    <location>
        <begin position="136"/>
        <end position="139"/>
    </location>
    <ligand>
        <name>GTP</name>
        <dbReference type="ChEBI" id="CHEBI:37565"/>
    </ligand>
</feature>
<keyword id="KW-0963">Cytoplasm</keyword>
<keyword id="KW-0251">Elongation factor</keyword>
<keyword id="KW-0342">GTP-binding</keyword>
<keyword id="KW-0378">Hydrolase</keyword>
<keyword id="KW-0460">Magnesium</keyword>
<keyword id="KW-0479">Metal-binding</keyword>
<keyword id="KW-0547">Nucleotide-binding</keyword>
<keyword id="KW-0648">Protein biosynthesis</keyword>
<keyword id="KW-1185">Reference proteome</keyword>
<dbReference type="EC" id="3.6.5.3" evidence="2"/>
<dbReference type="EMBL" id="Z34275">
    <property type="protein sequence ID" value="CAA84029.1"/>
    <property type="molecule type" value="Genomic_DNA"/>
</dbReference>
<dbReference type="EMBL" id="AF222894">
    <property type="protein sequence ID" value="AAF30935.1"/>
    <property type="molecule type" value="Genomic_DNA"/>
</dbReference>
<dbReference type="RefSeq" id="WP_006688507.1">
    <property type="nucleotide sequence ID" value="NC_002162.1"/>
</dbReference>
<dbReference type="SMR" id="P50068"/>
<dbReference type="STRING" id="273119.UU522"/>
<dbReference type="EnsemblBacteria" id="AAF30935">
    <property type="protein sequence ID" value="AAF30935"/>
    <property type="gene ID" value="UU522"/>
</dbReference>
<dbReference type="GeneID" id="29672348"/>
<dbReference type="KEGG" id="uur:UU522"/>
<dbReference type="eggNOG" id="COG0050">
    <property type="taxonomic scope" value="Bacteria"/>
</dbReference>
<dbReference type="HOGENOM" id="CLU_007265_0_1_14"/>
<dbReference type="OrthoDB" id="9804504at2"/>
<dbReference type="Proteomes" id="UP000000423">
    <property type="component" value="Chromosome"/>
</dbReference>
<dbReference type="GO" id="GO:0005829">
    <property type="term" value="C:cytosol"/>
    <property type="evidence" value="ECO:0007669"/>
    <property type="project" value="TreeGrafter"/>
</dbReference>
<dbReference type="GO" id="GO:0005525">
    <property type="term" value="F:GTP binding"/>
    <property type="evidence" value="ECO:0007669"/>
    <property type="project" value="UniProtKB-UniRule"/>
</dbReference>
<dbReference type="GO" id="GO:0003924">
    <property type="term" value="F:GTPase activity"/>
    <property type="evidence" value="ECO:0007669"/>
    <property type="project" value="InterPro"/>
</dbReference>
<dbReference type="GO" id="GO:0003746">
    <property type="term" value="F:translation elongation factor activity"/>
    <property type="evidence" value="ECO:0007669"/>
    <property type="project" value="UniProtKB-UniRule"/>
</dbReference>
<dbReference type="CDD" id="cd01884">
    <property type="entry name" value="EF_Tu"/>
    <property type="match status" value="1"/>
</dbReference>
<dbReference type="CDD" id="cd03697">
    <property type="entry name" value="EFTU_II"/>
    <property type="match status" value="1"/>
</dbReference>
<dbReference type="CDD" id="cd03707">
    <property type="entry name" value="EFTU_III"/>
    <property type="match status" value="1"/>
</dbReference>
<dbReference type="FunFam" id="2.40.30.10:FF:000001">
    <property type="entry name" value="Elongation factor Tu"/>
    <property type="match status" value="1"/>
</dbReference>
<dbReference type="FunFam" id="3.40.50.300:FF:000003">
    <property type="entry name" value="Elongation factor Tu"/>
    <property type="match status" value="1"/>
</dbReference>
<dbReference type="Gene3D" id="3.40.50.300">
    <property type="entry name" value="P-loop containing nucleotide triphosphate hydrolases"/>
    <property type="match status" value="1"/>
</dbReference>
<dbReference type="Gene3D" id="2.40.30.10">
    <property type="entry name" value="Translation factors"/>
    <property type="match status" value="2"/>
</dbReference>
<dbReference type="HAMAP" id="MF_00118_B">
    <property type="entry name" value="EF_Tu_B"/>
    <property type="match status" value="1"/>
</dbReference>
<dbReference type="InterPro" id="IPR041709">
    <property type="entry name" value="EF-Tu_GTP-bd"/>
</dbReference>
<dbReference type="InterPro" id="IPR050055">
    <property type="entry name" value="EF-Tu_GTPase"/>
</dbReference>
<dbReference type="InterPro" id="IPR004161">
    <property type="entry name" value="EFTu-like_2"/>
</dbReference>
<dbReference type="InterPro" id="IPR033720">
    <property type="entry name" value="EFTU_2"/>
</dbReference>
<dbReference type="InterPro" id="IPR031157">
    <property type="entry name" value="G_TR_CS"/>
</dbReference>
<dbReference type="InterPro" id="IPR027417">
    <property type="entry name" value="P-loop_NTPase"/>
</dbReference>
<dbReference type="InterPro" id="IPR005225">
    <property type="entry name" value="Small_GTP-bd"/>
</dbReference>
<dbReference type="InterPro" id="IPR000795">
    <property type="entry name" value="T_Tr_GTP-bd_dom"/>
</dbReference>
<dbReference type="InterPro" id="IPR009000">
    <property type="entry name" value="Transl_B-barrel_sf"/>
</dbReference>
<dbReference type="InterPro" id="IPR009001">
    <property type="entry name" value="Transl_elong_EF1A/Init_IF2_C"/>
</dbReference>
<dbReference type="InterPro" id="IPR004541">
    <property type="entry name" value="Transl_elong_EFTu/EF1A_bac/org"/>
</dbReference>
<dbReference type="InterPro" id="IPR004160">
    <property type="entry name" value="Transl_elong_EFTu/EF1A_C"/>
</dbReference>
<dbReference type="NCBIfam" id="TIGR00485">
    <property type="entry name" value="EF-Tu"/>
    <property type="match status" value="1"/>
</dbReference>
<dbReference type="NCBIfam" id="NF000766">
    <property type="entry name" value="PRK00049.1"/>
    <property type="match status" value="1"/>
</dbReference>
<dbReference type="NCBIfam" id="NF009372">
    <property type="entry name" value="PRK12735.1"/>
    <property type="match status" value="1"/>
</dbReference>
<dbReference type="NCBIfam" id="NF009373">
    <property type="entry name" value="PRK12736.1"/>
    <property type="match status" value="1"/>
</dbReference>
<dbReference type="NCBIfam" id="TIGR00231">
    <property type="entry name" value="small_GTP"/>
    <property type="match status" value="1"/>
</dbReference>
<dbReference type="PANTHER" id="PTHR43721:SF22">
    <property type="entry name" value="ELONGATION FACTOR TU, MITOCHONDRIAL"/>
    <property type="match status" value="1"/>
</dbReference>
<dbReference type="PANTHER" id="PTHR43721">
    <property type="entry name" value="ELONGATION FACTOR TU-RELATED"/>
    <property type="match status" value="1"/>
</dbReference>
<dbReference type="Pfam" id="PF00009">
    <property type="entry name" value="GTP_EFTU"/>
    <property type="match status" value="1"/>
</dbReference>
<dbReference type="Pfam" id="PF03144">
    <property type="entry name" value="GTP_EFTU_D2"/>
    <property type="match status" value="1"/>
</dbReference>
<dbReference type="Pfam" id="PF03143">
    <property type="entry name" value="GTP_EFTU_D3"/>
    <property type="match status" value="1"/>
</dbReference>
<dbReference type="PRINTS" id="PR00315">
    <property type="entry name" value="ELONGATNFCT"/>
</dbReference>
<dbReference type="SUPFAM" id="SSF50465">
    <property type="entry name" value="EF-Tu/eEF-1alpha/eIF2-gamma C-terminal domain"/>
    <property type="match status" value="1"/>
</dbReference>
<dbReference type="SUPFAM" id="SSF52540">
    <property type="entry name" value="P-loop containing nucleoside triphosphate hydrolases"/>
    <property type="match status" value="1"/>
</dbReference>
<dbReference type="SUPFAM" id="SSF50447">
    <property type="entry name" value="Translation proteins"/>
    <property type="match status" value="1"/>
</dbReference>
<dbReference type="PROSITE" id="PS00301">
    <property type="entry name" value="G_TR_1"/>
    <property type="match status" value="1"/>
</dbReference>
<dbReference type="PROSITE" id="PS51722">
    <property type="entry name" value="G_TR_2"/>
    <property type="match status" value="1"/>
</dbReference>